<reference key="1">
    <citation type="journal article" date="2001" name="Nature">
        <title>Genome sequence of enterohaemorrhagic Escherichia coli O157:H7.</title>
        <authorList>
            <person name="Perna N.T."/>
            <person name="Plunkett G. III"/>
            <person name="Burland V."/>
            <person name="Mau B."/>
            <person name="Glasner J.D."/>
            <person name="Rose D.J."/>
            <person name="Mayhew G.F."/>
            <person name="Evans P.S."/>
            <person name="Gregor J."/>
            <person name="Kirkpatrick H.A."/>
            <person name="Posfai G."/>
            <person name="Hackett J."/>
            <person name="Klink S."/>
            <person name="Boutin A."/>
            <person name="Shao Y."/>
            <person name="Miller L."/>
            <person name="Grotbeck E.J."/>
            <person name="Davis N.W."/>
            <person name="Lim A."/>
            <person name="Dimalanta E.T."/>
            <person name="Potamousis K."/>
            <person name="Apodaca J."/>
            <person name="Anantharaman T.S."/>
            <person name="Lin J."/>
            <person name="Yen G."/>
            <person name="Schwartz D.C."/>
            <person name="Welch R.A."/>
            <person name="Blattner F.R."/>
        </authorList>
    </citation>
    <scope>NUCLEOTIDE SEQUENCE [LARGE SCALE GENOMIC DNA]</scope>
    <source>
        <strain>O157:H7 / EDL933 / ATCC 700927 / EHEC</strain>
    </source>
</reference>
<reference key="2">
    <citation type="journal article" date="2001" name="DNA Res.">
        <title>Complete genome sequence of enterohemorrhagic Escherichia coli O157:H7 and genomic comparison with a laboratory strain K-12.</title>
        <authorList>
            <person name="Hayashi T."/>
            <person name="Makino K."/>
            <person name="Ohnishi M."/>
            <person name="Kurokawa K."/>
            <person name="Ishii K."/>
            <person name="Yokoyama K."/>
            <person name="Han C.-G."/>
            <person name="Ohtsubo E."/>
            <person name="Nakayama K."/>
            <person name="Murata T."/>
            <person name="Tanaka M."/>
            <person name="Tobe T."/>
            <person name="Iida T."/>
            <person name="Takami H."/>
            <person name="Honda T."/>
            <person name="Sasakawa C."/>
            <person name="Ogasawara N."/>
            <person name="Yasunaga T."/>
            <person name="Kuhara S."/>
            <person name="Shiba T."/>
            <person name="Hattori M."/>
            <person name="Shinagawa H."/>
        </authorList>
    </citation>
    <scope>NUCLEOTIDE SEQUENCE [LARGE SCALE GENOMIC DNA]</scope>
    <source>
        <strain>O157:H7 / Sakai / RIMD 0509952 / EHEC</strain>
    </source>
</reference>
<comment type="function">
    <text evidence="1">Catalyzes the excretion of spermidine.</text>
</comment>
<comment type="subunit">
    <text evidence="1">Forms a complex with MdtJ.</text>
</comment>
<comment type="subcellular location">
    <subcellularLocation>
        <location evidence="1">Cell inner membrane</location>
        <topology evidence="1">Multi-pass membrane protein</topology>
    </subcellularLocation>
</comment>
<comment type="similarity">
    <text evidence="3">Belongs to the drug/metabolite transporter (DMT) superfamily. Small multidrug resistance (SMR) (TC 2.A.7.1) family. MdtI subfamily.</text>
</comment>
<proteinExistence type="inferred from homology"/>
<organism>
    <name type="scientific">Escherichia coli O157:H7</name>
    <dbReference type="NCBI Taxonomy" id="83334"/>
    <lineage>
        <taxon>Bacteria</taxon>
        <taxon>Pseudomonadati</taxon>
        <taxon>Pseudomonadota</taxon>
        <taxon>Gammaproteobacteria</taxon>
        <taxon>Enterobacterales</taxon>
        <taxon>Enterobacteriaceae</taxon>
        <taxon>Escherichia</taxon>
    </lineage>
</organism>
<gene>
    <name type="primary">mdtI</name>
    <name type="ordered locus">Z2593</name>
    <name type="ordered locus">ECs2305</name>
</gene>
<accession>P69211</accession>
<accession>P77670</accession>
<feature type="chain" id="PRO_0000108077" description="Spermidine export protein MdtI">
    <location>
        <begin position="1"/>
        <end position="109"/>
    </location>
</feature>
<feature type="topological domain" description="Periplasmic" evidence="2">
    <location>
        <begin position="1"/>
        <end position="5"/>
    </location>
</feature>
<feature type="transmembrane region" description="Helical" evidence="2">
    <location>
        <begin position="6"/>
        <end position="26"/>
    </location>
</feature>
<feature type="topological domain" description="Cytoplasmic" evidence="2">
    <location>
        <begin position="27"/>
        <end position="35"/>
    </location>
</feature>
<feature type="transmembrane region" description="Helical" evidence="2">
    <location>
        <begin position="36"/>
        <end position="56"/>
    </location>
</feature>
<feature type="topological domain" description="Periplasmic" evidence="2">
    <location>
        <begin position="57"/>
        <end position="63"/>
    </location>
</feature>
<feature type="transmembrane region" description="Helical" evidence="2">
    <location>
        <begin position="64"/>
        <end position="84"/>
    </location>
</feature>
<feature type="topological domain" description="Cytoplasmic" evidence="2">
    <location>
        <begin position="85"/>
        <end position="87"/>
    </location>
</feature>
<feature type="transmembrane region" description="Helical" evidence="2">
    <location>
        <begin position="88"/>
        <end position="108"/>
    </location>
</feature>
<feature type="topological domain" description="Periplasmic" evidence="2">
    <location>
        <position position="109"/>
    </location>
</feature>
<protein>
    <recommendedName>
        <fullName>Spermidine export protein MdtI</fullName>
    </recommendedName>
</protein>
<dbReference type="EMBL" id="AE005174">
    <property type="protein sequence ID" value="AAG56586.1"/>
    <property type="molecule type" value="Genomic_DNA"/>
</dbReference>
<dbReference type="EMBL" id="BA000007">
    <property type="protein sequence ID" value="BAB35728.1"/>
    <property type="molecule type" value="Genomic_DNA"/>
</dbReference>
<dbReference type="PIR" id="A99917">
    <property type="entry name" value="A99917"/>
</dbReference>
<dbReference type="PIR" id="F85765">
    <property type="entry name" value="F85765"/>
</dbReference>
<dbReference type="RefSeq" id="NP_310332.1">
    <property type="nucleotide sequence ID" value="NC_002695.1"/>
</dbReference>
<dbReference type="RefSeq" id="WP_000046661.1">
    <property type="nucleotide sequence ID" value="NZ_VOAI01000007.1"/>
</dbReference>
<dbReference type="SMR" id="P69211"/>
<dbReference type="STRING" id="155864.Z2593"/>
<dbReference type="GeneID" id="912405"/>
<dbReference type="GeneID" id="93775747"/>
<dbReference type="KEGG" id="ece:Z2593"/>
<dbReference type="KEGG" id="ecs:ECs_2305"/>
<dbReference type="PATRIC" id="fig|386585.9.peg.2415"/>
<dbReference type="eggNOG" id="COG2076">
    <property type="taxonomic scope" value="Bacteria"/>
</dbReference>
<dbReference type="HOGENOM" id="CLU_133067_0_4_6"/>
<dbReference type="OMA" id="VAAGWIM"/>
<dbReference type="Proteomes" id="UP000000558">
    <property type="component" value="Chromosome"/>
</dbReference>
<dbReference type="Proteomes" id="UP000002519">
    <property type="component" value="Chromosome"/>
</dbReference>
<dbReference type="GO" id="GO:0005886">
    <property type="term" value="C:plasma membrane"/>
    <property type="evidence" value="ECO:0007669"/>
    <property type="project" value="UniProtKB-SubCell"/>
</dbReference>
<dbReference type="GO" id="GO:0015199">
    <property type="term" value="F:amino-acid betaine transmembrane transporter activity"/>
    <property type="evidence" value="ECO:0007669"/>
    <property type="project" value="TreeGrafter"/>
</dbReference>
<dbReference type="GO" id="GO:0015297">
    <property type="term" value="F:antiporter activity"/>
    <property type="evidence" value="ECO:0007669"/>
    <property type="project" value="TreeGrafter"/>
</dbReference>
<dbReference type="GO" id="GO:0015220">
    <property type="term" value="F:choline transmembrane transporter activity"/>
    <property type="evidence" value="ECO:0007669"/>
    <property type="project" value="TreeGrafter"/>
</dbReference>
<dbReference type="GO" id="GO:0015606">
    <property type="term" value="F:spermidine transmembrane transporter activity"/>
    <property type="evidence" value="ECO:0007669"/>
    <property type="project" value="UniProtKB-UniRule"/>
</dbReference>
<dbReference type="GO" id="GO:0031460">
    <property type="term" value="P:glycine betaine transport"/>
    <property type="evidence" value="ECO:0007669"/>
    <property type="project" value="TreeGrafter"/>
</dbReference>
<dbReference type="FunFam" id="1.10.3730.20:FF:000001">
    <property type="entry name" value="Quaternary ammonium compound resistance transporter SugE"/>
    <property type="match status" value="1"/>
</dbReference>
<dbReference type="Gene3D" id="1.10.3730.20">
    <property type="match status" value="1"/>
</dbReference>
<dbReference type="HAMAP" id="MF_01597">
    <property type="entry name" value="MdtI"/>
    <property type="match status" value="1"/>
</dbReference>
<dbReference type="InterPro" id="IPR000390">
    <property type="entry name" value="Small_drug/metabolite_transptr"/>
</dbReference>
<dbReference type="InterPro" id="IPR045324">
    <property type="entry name" value="Small_multidrug_res"/>
</dbReference>
<dbReference type="InterPro" id="IPR023737">
    <property type="entry name" value="Spermidine_export_MdtI"/>
</dbReference>
<dbReference type="NCBIfam" id="NF007934">
    <property type="entry name" value="PRK10650.1"/>
    <property type="match status" value="1"/>
</dbReference>
<dbReference type="PANTHER" id="PTHR30561">
    <property type="entry name" value="SMR FAMILY PROTON-DEPENDENT DRUG EFFLUX TRANSPORTER SUGE"/>
    <property type="match status" value="1"/>
</dbReference>
<dbReference type="PANTHER" id="PTHR30561:SF6">
    <property type="entry name" value="SPERMIDINE EXPORT PROTEIN MDTI"/>
    <property type="match status" value="1"/>
</dbReference>
<dbReference type="Pfam" id="PF00893">
    <property type="entry name" value="Multi_Drug_Res"/>
    <property type="match status" value="1"/>
</dbReference>
<dbReference type="SUPFAM" id="SSF103481">
    <property type="entry name" value="Multidrug resistance efflux transporter EmrE"/>
    <property type="match status" value="1"/>
</dbReference>
<keyword id="KW-0997">Cell inner membrane</keyword>
<keyword id="KW-1003">Cell membrane</keyword>
<keyword id="KW-0472">Membrane</keyword>
<keyword id="KW-1185">Reference proteome</keyword>
<keyword id="KW-0812">Transmembrane</keyword>
<keyword id="KW-1133">Transmembrane helix</keyword>
<keyword id="KW-0813">Transport</keyword>
<name>MDTI_ECO57</name>
<evidence type="ECO:0000250" key="1"/>
<evidence type="ECO:0000255" key="2"/>
<evidence type="ECO:0000255" key="3">
    <source>
        <dbReference type="HAMAP-Rule" id="MF_01597"/>
    </source>
</evidence>
<sequence length="109" mass="11720">MAQFEWVHAAWLALAIVLEIVANVFLKFSDGFRRKIFGLLSLAAVLAAFSALSQAVKGIDLSVAYALWGGFGIAATLAAGWILFGQRLNRKGWIGLVLLLAGMIMVKLA</sequence>